<organism>
    <name type="scientific">Micrococcus luteus (strain ATCC 4698 / DSM 20030 / JCM 1464 / CCM 169 / CCUG 5858 / IAM 1056 / NBRC 3333 / NCIMB 9278 / NCTC 2665 / VKM Ac-2230)</name>
    <name type="common">Micrococcus lysodeikticus</name>
    <dbReference type="NCBI Taxonomy" id="465515"/>
    <lineage>
        <taxon>Bacteria</taxon>
        <taxon>Bacillati</taxon>
        <taxon>Actinomycetota</taxon>
        <taxon>Actinomycetes</taxon>
        <taxon>Micrococcales</taxon>
        <taxon>Micrococcaceae</taxon>
        <taxon>Micrococcus</taxon>
    </lineage>
</organism>
<sequence>MSRIGRLPITIPAGVDVTIDGDRVSVKGPKGQLEHSLPTPITATLEEGQVTVARPDDERESRSLHGLTRTLISNMVEGVTNGFSKQLEVVGTGYRVQAKGQDLEFALGYSHPVPVKAPQGITFTVEGNRVTVAGIDKQQVGETAANIRKLRRPDPYKGKGVRYAGEQIRRKAGKAGK</sequence>
<dbReference type="EMBL" id="CP001628">
    <property type="protein sequence ID" value="ACS31189.1"/>
    <property type="molecule type" value="Genomic_DNA"/>
</dbReference>
<dbReference type="RefSeq" id="WP_002857496.1">
    <property type="nucleotide sequence ID" value="NC_012803.1"/>
</dbReference>
<dbReference type="SMR" id="C5CC48"/>
<dbReference type="STRING" id="465515.Mlut_17020"/>
<dbReference type="EnsemblBacteria" id="ACS31189">
    <property type="protein sequence ID" value="ACS31189"/>
    <property type="gene ID" value="Mlut_17020"/>
</dbReference>
<dbReference type="GeneID" id="93343569"/>
<dbReference type="KEGG" id="mlu:Mlut_17020"/>
<dbReference type="eggNOG" id="COG0097">
    <property type="taxonomic scope" value="Bacteria"/>
</dbReference>
<dbReference type="HOGENOM" id="CLU_065464_1_2_11"/>
<dbReference type="Proteomes" id="UP000000738">
    <property type="component" value="Chromosome"/>
</dbReference>
<dbReference type="GO" id="GO:0022625">
    <property type="term" value="C:cytosolic large ribosomal subunit"/>
    <property type="evidence" value="ECO:0007669"/>
    <property type="project" value="TreeGrafter"/>
</dbReference>
<dbReference type="GO" id="GO:0019843">
    <property type="term" value="F:rRNA binding"/>
    <property type="evidence" value="ECO:0007669"/>
    <property type="project" value="UniProtKB-UniRule"/>
</dbReference>
<dbReference type="GO" id="GO:0003735">
    <property type="term" value="F:structural constituent of ribosome"/>
    <property type="evidence" value="ECO:0007669"/>
    <property type="project" value="InterPro"/>
</dbReference>
<dbReference type="GO" id="GO:0002181">
    <property type="term" value="P:cytoplasmic translation"/>
    <property type="evidence" value="ECO:0007669"/>
    <property type="project" value="TreeGrafter"/>
</dbReference>
<dbReference type="FunFam" id="3.90.930.12:FF:000001">
    <property type="entry name" value="50S ribosomal protein L6"/>
    <property type="match status" value="1"/>
</dbReference>
<dbReference type="FunFam" id="3.90.930.12:FF:000002">
    <property type="entry name" value="50S ribosomal protein L6"/>
    <property type="match status" value="1"/>
</dbReference>
<dbReference type="Gene3D" id="3.90.930.12">
    <property type="entry name" value="Ribosomal protein L6, alpha-beta domain"/>
    <property type="match status" value="2"/>
</dbReference>
<dbReference type="HAMAP" id="MF_01365_B">
    <property type="entry name" value="Ribosomal_uL6_B"/>
    <property type="match status" value="1"/>
</dbReference>
<dbReference type="InterPro" id="IPR000702">
    <property type="entry name" value="Ribosomal_uL6-like"/>
</dbReference>
<dbReference type="InterPro" id="IPR036789">
    <property type="entry name" value="Ribosomal_uL6-like_a/b-dom_sf"/>
</dbReference>
<dbReference type="InterPro" id="IPR020040">
    <property type="entry name" value="Ribosomal_uL6_a/b-dom"/>
</dbReference>
<dbReference type="InterPro" id="IPR019906">
    <property type="entry name" value="Ribosomal_uL6_bac-type"/>
</dbReference>
<dbReference type="InterPro" id="IPR002358">
    <property type="entry name" value="Ribosomal_uL6_CS"/>
</dbReference>
<dbReference type="NCBIfam" id="TIGR03654">
    <property type="entry name" value="L6_bact"/>
    <property type="match status" value="1"/>
</dbReference>
<dbReference type="PANTHER" id="PTHR11655">
    <property type="entry name" value="60S/50S RIBOSOMAL PROTEIN L6/L9"/>
    <property type="match status" value="1"/>
</dbReference>
<dbReference type="PANTHER" id="PTHR11655:SF14">
    <property type="entry name" value="LARGE RIBOSOMAL SUBUNIT PROTEIN UL6M"/>
    <property type="match status" value="1"/>
</dbReference>
<dbReference type="Pfam" id="PF00347">
    <property type="entry name" value="Ribosomal_L6"/>
    <property type="match status" value="2"/>
</dbReference>
<dbReference type="PIRSF" id="PIRSF002162">
    <property type="entry name" value="Ribosomal_L6"/>
    <property type="match status" value="1"/>
</dbReference>
<dbReference type="PRINTS" id="PR00059">
    <property type="entry name" value="RIBOSOMALL6"/>
</dbReference>
<dbReference type="SUPFAM" id="SSF56053">
    <property type="entry name" value="Ribosomal protein L6"/>
    <property type="match status" value="2"/>
</dbReference>
<dbReference type="PROSITE" id="PS00525">
    <property type="entry name" value="RIBOSOMAL_L6_1"/>
    <property type="match status" value="1"/>
</dbReference>
<accession>C5CC48</accession>
<feature type="initiator methionine" description="Removed" evidence="2">
    <location>
        <position position="1"/>
    </location>
</feature>
<feature type="chain" id="PRO_1000214931" description="Large ribosomal subunit protein uL6">
    <location>
        <begin position="2"/>
        <end position="177"/>
    </location>
</feature>
<gene>
    <name evidence="1" type="primary">rplF</name>
    <name type="ordered locus">Mlut_17020</name>
</gene>
<keyword id="KW-0903">Direct protein sequencing</keyword>
<keyword id="KW-1185">Reference proteome</keyword>
<keyword id="KW-0687">Ribonucleoprotein</keyword>
<keyword id="KW-0689">Ribosomal protein</keyword>
<keyword id="KW-0694">RNA-binding</keyword>
<keyword id="KW-0699">rRNA-binding</keyword>
<comment type="function">
    <text evidence="1">This protein binds to the 23S rRNA, and is important in its secondary structure. It is located near the subunit interface in the base of the L7/L12 stalk, and near the tRNA binding site of the peptidyltransferase center.</text>
</comment>
<comment type="subunit">
    <text evidence="1">Part of the 50S ribosomal subunit.</text>
</comment>
<comment type="similarity">
    <text evidence="1">Belongs to the universal ribosomal protein uL6 family.</text>
</comment>
<name>RL6_MICLC</name>
<proteinExistence type="evidence at protein level"/>
<evidence type="ECO:0000255" key="1">
    <source>
        <dbReference type="HAMAP-Rule" id="MF_01365"/>
    </source>
</evidence>
<evidence type="ECO:0000269" key="2">
    <source>
    </source>
</evidence>
<evidence type="ECO:0000305" key="3"/>
<protein>
    <recommendedName>
        <fullName evidence="1">Large ribosomal subunit protein uL6</fullName>
    </recommendedName>
    <alternativeName>
        <fullName evidence="3">50S ribosomal protein L6</fullName>
    </alternativeName>
</protein>
<reference key="1">
    <citation type="journal article" date="2010" name="J. Bacteriol.">
        <title>Genome sequence of the Fleming strain of Micrococcus luteus, a simple free-living actinobacterium.</title>
        <authorList>
            <person name="Young M."/>
            <person name="Artsatbanov V."/>
            <person name="Beller H.R."/>
            <person name="Chandra G."/>
            <person name="Chater K.F."/>
            <person name="Dover L.G."/>
            <person name="Goh E.B."/>
            <person name="Kahan T."/>
            <person name="Kaprelyants A.S."/>
            <person name="Kyrpides N."/>
            <person name="Lapidus A."/>
            <person name="Lowry S.R."/>
            <person name="Lykidis A."/>
            <person name="Mahillon J."/>
            <person name="Markowitz V."/>
            <person name="Mavromatis K."/>
            <person name="Mukamolova G.V."/>
            <person name="Oren A."/>
            <person name="Rokem J.S."/>
            <person name="Smith M.C."/>
            <person name="Young D.I."/>
            <person name="Greenblatt C.L."/>
        </authorList>
    </citation>
    <scope>NUCLEOTIDE SEQUENCE [LARGE SCALE GENOMIC DNA]</scope>
    <source>
        <strain>ATCC 4698 / DSM 20030 / JCM 1464 / CCM 169 / CCUG 5858 / IAM 1056 / NBRC 3333 / NCIMB 9278 / NCTC 2665 / VKM Ac-2230</strain>
    </source>
</reference>
<reference key="2">
    <citation type="journal article" date="1995" name="J. Biol. Chem.">
        <title>Purification and cloning of Micrococcus luteus ultraviolet endonuclease, an N-glycosylase/abasic lyase that proceeds via an imino enzyme-DNA intermediate.</title>
        <authorList>
            <person name="Piersen C.E."/>
            <person name="Prince M.A."/>
            <person name="Augustine M.L."/>
            <person name="Dodson M.L."/>
            <person name="Lloyd R.S."/>
        </authorList>
    </citation>
    <scope>PROTEIN SEQUENCE OF 2-14</scope>
</reference>